<protein>
    <recommendedName>
        <fullName evidence="1">UDP-N-acetylenolpyruvoylglucosamine reductase</fullName>
        <ecNumber evidence="1">1.3.1.98</ecNumber>
    </recommendedName>
    <alternativeName>
        <fullName evidence="1">UDP-N-acetylmuramate dehydrogenase</fullName>
    </alternativeName>
</protein>
<evidence type="ECO:0000255" key="1">
    <source>
        <dbReference type="HAMAP-Rule" id="MF_00037"/>
    </source>
</evidence>
<proteinExistence type="inferred from homology"/>
<sequence>MSLQVQPQVSLKPFNTFGVDVRAQLFAEAHSDADVREALAYASAHDVPLLVIGGGSNLLLTADIPALVLRMASRGIRVISDDGNRVVIEAEAGEPWHPFVQHTLAQGFSGLENLSLIPGTVGAAPMQNIGAYGVEIKDVFAGLTALDRQTGELRDFSLEECRFAYRDSVFKQQPGRWLILRVRFALNRVAHLHLEYGPVRQRLTEQGIEQPTPTDVSRAICSIRSEKLPDPAVLGNAGSFFKNPLVSAAVVAQIKAQHPDLVAYAQPDGQMKLAAGWLIERAGWKGFREADAGVHKLQALVLVNYGAATGLQLLDLAQRIQKDIAERFNVELEMEPNRY</sequence>
<dbReference type="EC" id="1.3.1.98" evidence="1"/>
<dbReference type="EMBL" id="CP000094">
    <property type="protein sequence ID" value="ABA75908.1"/>
    <property type="molecule type" value="Genomic_DNA"/>
</dbReference>
<dbReference type="RefSeq" id="WP_011335447.1">
    <property type="nucleotide sequence ID" value="NC_007492.2"/>
</dbReference>
<dbReference type="SMR" id="Q3K8J6"/>
<dbReference type="KEGG" id="pfo:Pfl01_4171"/>
<dbReference type="eggNOG" id="COG0812">
    <property type="taxonomic scope" value="Bacteria"/>
</dbReference>
<dbReference type="HOGENOM" id="CLU_035304_0_0_6"/>
<dbReference type="UniPathway" id="UPA00219"/>
<dbReference type="Proteomes" id="UP000002704">
    <property type="component" value="Chromosome"/>
</dbReference>
<dbReference type="GO" id="GO:0005829">
    <property type="term" value="C:cytosol"/>
    <property type="evidence" value="ECO:0007669"/>
    <property type="project" value="TreeGrafter"/>
</dbReference>
<dbReference type="GO" id="GO:0071949">
    <property type="term" value="F:FAD binding"/>
    <property type="evidence" value="ECO:0007669"/>
    <property type="project" value="InterPro"/>
</dbReference>
<dbReference type="GO" id="GO:0008762">
    <property type="term" value="F:UDP-N-acetylmuramate dehydrogenase activity"/>
    <property type="evidence" value="ECO:0007669"/>
    <property type="project" value="UniProtKB-UniRule"/>
</dbReference>
<dbReference type="GO" id="GO:0051301">
    <property type="term" value="P:cell division"/>
    <property type="evidence" value="ECO:0007669"/>
    <property type="project" value="UniProtKB-KW"/>
</dbReference>
<dbReference type="GO" id="GO:0071555">
    <property type="term" value="P:cell wall organization"/>
    <property type="evidence" value="ECO:0007669"/>
    <property type="project" value="UniProtKB-KW"/>
</dbReference>
<dbReference type="GO" id="GO:0009252">
    <property type="term" value="P:peptidoglycan biosynthetic process"/>
    <property type="evidence" value="ECO:0007669"/>
    <property type="project" value="UniProtKB-UniRule"/>
</dbReference>
<dbReference type="GO" id="GO:0008360">
    <property type="term" value="P:regulation of cell shape"/>
    <property type="evidence" value="ECO:0007669"/>
    <property type="project" value="UniProtKB-KW"/>
</dbReference>
<dbReference type="Gene3D" id="3.30.465.10">
    <property type="match status" value="1"/>
</dbReference>
<dbReference type="Gene3D" id="3.90.78.10">
    <property type="entry name" value="UDP-N-acetylenolpyruvoylglucosamine reductase, C-terminal domain"/>
    <property type="match status" value="1"/>
</dbReference>
<dbReference type="Gene3D" id="3.30.43.10">
    <property type="entry name" value="Uridine Diphospho-n-acetylenolpyruvylglucosamine Reductase, domain 2"/>
    <property type="match status" value="1"/>
</dbReference>
<dbReference type="HAMAP" id="MF_00037">
    <property type="entry name" value="MurB"/>
    <property type="match status" value="1"/>
</dbReference>
<dbReference type="InterPro" id="IPR016166">
    <property type="entry name" value="FAD-bd_PCMH"/>
</dbReference>
<dbReference type="InterPro" id="IPR036318">
    <property type="entry name" value="FAD-bd_PCMH-like_sf"/>
</dbReference>
<dbReference type="InterPro" id="IPR016167">
    <property type="entry name" value="FAD-bd_PCMH_sub1"/>
</dbReference>
<dbReference type="InterPro" id="IPR016169">
    <property type="entry name" value="FAD-bd_PCMH_sub2"/>
</dbReference>
<dbReference type="InterPro" id="IPR003170">
    <property type="entry name" value="MurB"/>
</dbReference>
<dbReference type="InterPro" id="IPR011601">
    <property type="entry name" value="MurB_C"/>
</dbReference>
<dbReference type="InterPro" id="IPR036635">
    <property type="entry name" value="MurB_C_sf"/>
</dbReference>
<dbReference type="InterPro" id="IPR006094">
    <property type="entry name" value="Oxid_FAD_bind_N"/>
</dbReference>
<dbReference type="NCBIfam" id="TIGR00179">
    <property type="entry name" value="murB"/>
    <property type="match status" value="1"/>
</dbReference>
<dbReference type="NCBIfam" id="NF000755">
    <property type="entry name" value="PRK00046.1"/>
    <property type="match status" value="1"/>
</dbReference>
<dbReference type="NCBIfam" id="NF010478">
    <property type="entry name" value="PRK13903.1"/>
    <property type="match status" value="1"/>
</dbReference>
<dbReference type="PANTHER" id="PTHR21071">
    <property type="entry name" value="UDP-N-ACETYLENOLPYRUVOYLGLUCOSAMINE REDUCTASE"/>
    <property type="match status" value="1"/>
</dbReference>
<dbReference type="PANTHER" id="PTHR21071:SF4">
    <property type="entry name" value="UDP-N-ACETYLENOLPYRUVOYLGLUCOSAMINE REDUCTASE"/>
    <property type="match status" value="1"/>
</dbReference>
<dbReference type="Pfam" id="PF01565">
    <property type="entry name" value="FAD_binding_4"/>
    <property type="match status" value="1"/>
</dbReference>
<dbReference type="Pfam" id="PF02873">
    <property type="entry name" value="MurB_C"/>
    <property type="match status" value="1"/>
</dbReference>
<dbReference type="SUPFAM" id="SSF56176">
    <property type="entry name" value="FAD-binding/transporter-associated domain-like"/>
    <property type="match status" value="1"/>
</dbReference>
<dbReference type="SUPFAM" id="SSF56194">
    <property type="entry name" value="Uridine diphospho-N-Acetylenolpyruvylglucosamine reductase, MurB, C-terminal domain"/>
    <property type="match status" value="1"/>
</dbReference>
<dbReference type="PROSITE" id="PS51387">
    <property type="entry name" value="FAD_PCMH"/>
    <property type="match status" value="1"/>
</dbReference>
<accession>Q3K8J6</accession>
<organism>
    <name type="scientific">Pseudomonas fluorescens (strain Pf0-1)</name>
    <dbReference type="NCBI Taxonomy" id="205922"/>
    <lineage>
        <taxon>Bacteria</taxon>
        <taxon>Pseudomonadati</taxon>
        <taxon>Pseudomonadota</taxon>
        <taxon>Gammaproteobacteria</taxon>
        <taxon>Pseudomonadales</taxon>
        <taxon>Pseudomonadaceae</taxon>
        <taxon>Pseudomonas</taxon>
    </lineage>
</organism>
<gene>
    <name evidence="1" type="primary">murB</name>
    <name type="ordered locus">Pfl01_4171</name>
</gene>
<keyword id="KW-0131">Cell cycle</keyword>
<keyword id="KW-0132">Cell division</keyword>
<keyword id="KW-0133">Cell shape</keyword>
<keyword id="KW-0961">Cell wall biogenesis/degradation</keyword>
<keyword id="KW-0963">Cytoplasm</keyword>
<keyword id="KW-0274">FAD</keyword>
<keyword id="KW-0285">Flavoprotein</keyword>
<keyword id="KW-0521">NADP</keyword>
<keyword id="KW-0560">Oxidoreductase</keyword>
<keyword id="KW-0573">Peptidoglycan synthesis</keyword>
<comment type="function">
    <text evidence="1">Cell wall formation.</text>
</comment>
<comment type="catalytic activity">
    <reaction evidence="1">
        <text>UDP-N-acetyl-alpha-D-muramate + NADP(+) = UDP-N-acetyl-3-O-(1-carboxyvinyl)-alpha-D-glucosamine + NADPH + H(+)</text>
        <dbReference type="Rhea" id="RHEA:12248"/>
        <dbReference type="ChEBI" id="CHEBI:15378"/>
        <dbReference type="ChEBI" id="CHEBI:57783"/>
        <dbReference type="ChEBI" id="CHEBI:58349"/>
        <dbReference type="ChEBI" id="CHEBI:68483"/>
        <dbReference type="ChEBI" id="CHEBI:70757"/>
        <dbReference type="EC" id="1.3.1.98"/>
    </reaction>
</comment>
<comment type="cofactor">
    <cofactor evidence="1">
        <name>FAD</name>
        <dbReference type="ChEBI" id="CHEBI:57692"/>
    </cofactor>
</comment>
<comment type="pathway">
    <text evidence="1">Cell wall biogenesis; peptidoglycan biosynthesis.</text>
</comment>
<comment type="subcellular location">
    <subcellularLocation>
        <location evidence="1">Cytoplasm</location>
    </subcellularLocation>
</comment>
<comment type="similarity">
    <text evidence="1">Belongs to the MurB family.</text>
</comment>
<reference key="1">
    <citation type="journal article" date="2009" name="Genome Biol.">
        <title>Genomic and genetic analyses of diversity and plant interactions of Pseudomonas fluorescens.</title>
        <authorList>
            <person name="Silby M.W."/>
            <person name="Cerdeno-Tarraga A.M."/>
            <person name="Vernikos G.S."/>
            <person name="Giddens S.R."/>
            <person name="Jackson R.W."/>
            <person name="Preston G.M."/>
            <person name="Zhang X.-X."/>
            <person name="Moon C.D."/>
            <person name="Gehrig S.M."/>
            <person name="Godfrey S.A.C."/>
            <person name="Knight C.G."/>
            <person name="Malone J.G."/>
            <person name="Robinson Z."/>
            <person name="Spiers A.J."/>
            <person name="Harris S."/>
            <person name="Challis G.L."/>
            <person name="Yaxley A.M."/>
            <person name="Harris D."/>
            <person name="Seeger K."/>
            <person name="Murphy L."/>
            <person name="Rutter S."/>
            <person name="Squares R."/>
            <person name="Quail M.A."/>
            <person name="Saunders E."/>
            <person name="Mavromatis K."/>
            <person name="Brettin T.S."/>
            <person name="Bentley S.D."/>
            <person name="Hothersall J."/>
            <person name="Stephens E."/>
            <person name="Thomas C.M."/>
            <person name="Parkhill J."/>
            <person name="Levy S.B."/>
            <person name="Rainey P.B."/>
            <person name="Thomson N.R."/>
        </authorList>
    </citation>
    <scope>NUCLEOTIDE SEQUENCE [LARGE SCALE GENOMIC DNA]</scope>
    <source>
        <strain>Pf0-1</strain>
    </source>
</reference>
<feature type="chain" id="PRO_0000224708" description="UDP-N-acetylenolpyruvoylglucosamine reductase">
    <location>
        <begin position="1"/>
        <end position="339"/>
    </location>
</feature>
<feature type="domain" description="FAD-binding PCMH-type" evidence="1">
    <location>
        <begin position="19"/>
        <end position="189"/>
    </location>
</feature>
<feature type="active site" evidence="1">
    <location>
        <position position="166"/>
    </location>
</feature>
<feature type="active site" description="Proton donor" evidence="1">
    <location>
        <position position="239"/>
    </location>
</feature>
<feature type="active site" evidence="1">
    <location>
        <position position="335"/>
    </location>
</feature>
<name>MURB_PSEPF</name>